<evidence type="ECO:0000255" key="1">
    <source>
        <dbReference type="HAMAP-Rule" id="MF_00524"/>
    </source>
</evidence>
<evidence type="ECO:0000256" key="2">
    <source>
        <dbReference type="SAM" id="MobiDB-lite"/>
    </source>
</evidence>
<evidence type="ECO:0000305" key="3"/>
<protein>
    <recommendedName>
        <fullName evidence="1">Glucokinase</fullName>
        <ecNumber evidence="1">2.7.1.2</ecNumber>
    </recommendedName>
    <alternativeName>
        <fullName evidence="1">Glucose kinase</fullName>
    </alternativeName>
</protein>
<keyword id="KW-0067">ATP-binding</keyword>
<keyword id="KW-0963">Cytoplasm</keyword>
<keyword id="KW-0324">Glycolysis</keyword>
<keyword id="KW-0418">Kinase</keyword>
<keyword id="KW-0547">Nucleotide-binding</keyword>
<keyword id="KW-1185">Reference proteome</keyword>
<keyword id="KW-0808">Transferase</keyword>
<accession>Q7P1R6</accession>
<gene>
    <name evidence="1" type="primary">glk</name>
    <name type="ordered locus">CV_0147</name>
</gene>
<sequence>MSTGLPEAWPRLLGDVGGSNARFALETAPGVIEDILTLSNERYPTLEDALRDYLAQVGARRVAHAAIGIANPLNGDLVRMTNCHWSFSIEATRRALGLSTLLLLNDFTALALALPRLPRRELAQVGGGAPRPDAPLALIGPGTGLGVSALVPHAGGWRALAGEGGHTSFAPANEREIGIWRYASARFGHVSHERLLSGSGLSLLHRALCALDGAEEAGLAPAEVSARGLSGADARCREALEIFCALLGSAAGNLALTLGARGGVYIGGGIVPRLSGFFEQSPFRRRFEDKGRMSAYLADIPVYLITSAYPALPGVAAHLADHLAPRSDPAPVAAPTHPRGGTAGDMHA</sequence>
<name>GLK_CHRVO</name>
<organism>
    <name type="scientific">Chromobacterium violaceum (strain ATCC 12472 / DSM 30191 / JCM 1249 / CCUG 213 / NBRC 12614 / NCIMB 9131 / NCTC 9757 / MK)</name>
    <dbReference type="NCBI Taxonomy" id="243365"/>
    <lineage>
        <taxon>Bacteria</taxon>
        <taxon>Pseudomonadati</taxon>
        <taxon>Pseudomonadota</taxon>
        <taxon>Betaproteobacteria</taxon>
        <taxon>Neisseriales</taxon>
        <taxon>Chromobacteriaceae</taxon>
        <taxon>Chromobacterium</taxon>
    </lineage>
</organism>
<proteinExistence type="inferred from homology"/>
<reference key="1">
    <citation type="journal article" date="2003" name="Proc. Natl. Acad. Sci. U.S.A.">
        <title>The complete genome sequence of Chromobacterium violaceum reveals remarkable and exploitable bacterial adaptability.</title>
        <authorList>
            <person name="Vasconcelos A.T.R."/>
            <person name="de Almeida D.F."/>
            <person name="Hungria M."/>
            <person name="Guimaraes C.T."/>
            <person name="Antonio R.V."/>
            <person name="Almeida F.C."/>
            <person name="de Almeida L.G.P."/>
            <person name="de Almeida R."/>
            <person name="Alves-Gomes J.A."/>
            <person name="Andrade E.M."/>
            <person name="Araripe J."/>
            <person name="de Araujo M.F.F."/>
            <person name="Astolfi-Filho S."/>
            <person name="Azevedo V."/>
            <person name="Baptista A.J."/>
            <person name="Bataus L.A.M."/>
            <person name="Batista J.S."/>
            <person name="Belo A."/>
            <person name="van den Berg C."/>
            <person name="Bogo M."/>
            <person name="Bonatto S."/>
            <person name="Bordignon J."/>
            <person name="Brigido M.M."/>
            <person name="Brito C.A."/>
            <person name="Brocchi M."/>
            <person name="Burity H.A."/>
            <person name="Camargo A.A."/>
            <person name="Cardoso D.D.P."/>
            <person name="Carneiro N.P."/>
            <person name="Carraro D.M."/>
            <person name="Carvalho C.M.B."/>
            <person name="Cascardo J.C.M."/>
            <person name="Cavada B.S."/>
            <person name="Chueire L.M.O."/>
            <person name="Creczynski-Pasa T.B."/>
            <person name="Cunha-Junior N.C."/>
            <person name="Fagundes N."/>
            <person name="Falcao C.L."/>
            <person name="Fantinatti F."/>
            <person name="Farias I.P."/>
            <person name="Felipe M.S.S."/>
            <person name="Ferrari L.P."/>
            <person name="Ferro J.A."/>
            <person name="Ferro M.I.T."/>
            <person name="Franco G.R."/>
            <person name="Freitas N.S.A."/>
            <person name="Furlan L.R."/>
            <person name="Gazzinelli R.T."/>
            <person name="Gomes E.A."/>
            <person name="Goncalves P.R."/>
            <person name="Grangeiro T.B."/>
            <person name="Grattapaglia D."/>
            <person name="Grisard E.C."/>
            <person name="Hanna E.S."/>
            <person name="Jardim S.N."/>
            <person name="Laurino J."/>
            <person name="Leoi L.C.T."/>
            <person name="Lima L.F.A."/>
            <person name="Loureiro M.F."/>
            <person name="Lyra M.C.C.P."/>
            <person name="Madeira H.M.F."/>
            <person name="Manfio G.P."/>
            <person name="Maranhao A.Q."/>
            <person name="Martins W.S."/>
            <person name="di Mauro S.M.Z."/>
            <person name="de Medeiros S.R.B."/>
            <person name="Meissner R.V."/>
            <person name="Moreira M.A.M."/>
            <person name="Nascimento F.F."/>
            <person name="Nicolas M.F."/>
            <person name="Oliveira J.G."/>
            <person name="Oliveira S.C."/>
            <person name="Paixao R.F.C."/>
            <person name="Parente J.A."/>
            <person name="Pedrosa F.O."/>
            <person name="Pena S.D.J."/>
            <person name="Pereira J.O."/>
            <person name="Pereira M."/>
            <person name="Pinto L.S.R.C."/>
            <person name="Pinto L.S."/>
            <person name="Porto J.I.R."/>
            <person name="Potrich D.P."/>
            <person name="Ramalho-Neto C.E."/>
            <person name="Reis A.M.M."/>
            <person name="Rigo L.U."/>
            <person name="Rondinelli E."/>
            <person name="Santos E.B.P."/>
            <person name="Santos F.R."/>
            <person name="Schneider M.P.C."/>
            <person name="Seuanez H.N."/>
            <person name="Silva A.M.R."/>
            <person name="da Silva A.L.C."/>
            <person name="Silva D.W."/>
            <person name="Silva R."/>
            <person name="Simoes I.C."/>
            <person name="Simon D."/>
            <person name="Soares C.M.A."/>
            <person name="Soares R.B.A."/>
            <person name="Souza E.M."/>
            <person name="Souza K.R.L."/>
            <person name="Souza R.C."/>
            <person name="Steffens M.B.R."/>
            <person name="Steindel M."/>
            <person name="Teixeira S.R."/>
            <person name="Urmenyi T."/>
            <person name="Vettore A."/>
            <person name="Wassem R."/>
            <person name="Zaha A."/>
            <person name="Simpson A.J.G."/>
        </authorList>
    </citation>
    <scope>NUCLEOTIDE SEQUENCE [LARGE SCALE GENOMIC DNA]</scope>
    <source>
        <strain>ATCC 12472 / DSM 30191 / JCM 1249 / CCUG 213 / NBRC 12614 / NCIMB 9131 / NCTC 9757 / MK</strain>
    </source>
</reference>
<feature type="chain" id="PRO_0000268769" description="Glucokinase">
    <location>
        <begin position="1"/>
        <end position="348"/>
    </location>
</feature>
<feature type="region of interest" description="Disordered" evidence="2">
    <location>
        <begin position="327"/>
        <end position="348"/>
    </location>
</feature>
<feature type="binding site" evidence="1">
    <location>
        <begin position="14"/>
        <end position="19"/>
    </location>
    <ligand>
        <name>ATP</name>
        <dbReference type="ChEBI" id="CHEBI:30616"/>
    </ligand>
</feature>
<comment type="catalytic activity">
    <reaction evidence="1">
        <text>D-glucose + ATP = D-glucose 6-phosphate + ADP + H(+)</text>
        <dbReference type="Rhea" id="RHEA:17825"/>
        <dbReference type="ChEBI" id="CHEBI:4167"/>
        <dbReference type="ChEBI" id="CHEBI:15378"/>
        <dbReference type="ChEBI" id="CHEBI:30616"/>
        <dbReference type="ChEBI" id="CHEBI:61548"/>
        <dbReference type="ChEBI" id="CHEBI:456216"/>
        <dbReference type="EC" id="2.7.1.2"/>
    </reaction>
</comment>
<comment type="subcellular location">
    <subcellularLocation>
        <location evidence="1">Cytoplasm</location>
    </subcellularLocation>
</comment>
<comment type="similarity">
    <text evidence="1">Belongs to the bacterial glucokinase family.</text>
</comment>
<comment type="sequence caution" evidence="3">
    <conflict type="erroneous initiation">
        <sequence resource="EMBL-CDS" id="AAQ57826"/>
    </conflict>
</comment>
<dbReference type="EC" id="2.7.1.2" evidence="1"/>
<dbReference type="EMBL" id="AE016825">
    <property type="protein sequence ID" value="AAQ57826.1"/>
    <property type="status" value="ALT_INIT"/>
    <property type="molecule type" value="Genomic_DNA"/>
</dbReference>
<dbReference type="RefSeq" id="WP_043595186.1">
    <property type="nucleotide sequence ID" value="NC_005085.1"/>
</dbReference>
<dbReference type="SMR" id="Q7P1R6"/>
<dbReference type="STRING" id="243365.CV_0147"/>
<dbReference type="KEGG" id="cvi:CV_0147"/>
<dbReference type="eggNOG" id="COG0837">
    <property type="taxonomic scope" value="Bacteria"/>
</dbReference>
<dbReference type="HOGENOM" id="CLU_042582_1_0_4"/>
<dbReference type="OrthoDB" id="257751at2"/>
<dbReference type="Proteomes" id="UP000001424">
    <property type="component" value="Chromosome"/>
</dbReference>
<dbReference type="GO" id="GO:0005829">
    <property type="term" value="C:cytosol"/>
    <property type="evidence" value="ECO:0007669"/>
    <property type="project" value="TreeGrafter"/>
</dbReference>
<dbReference type="GO" id="GO:0005524">
    <property type="term" value="F:ATP binding"/>
    <property type="evidence" value="ECO:0007669"/>
    <property type="project" value="UniProtKB-UniRule"/>
</dbReference>
<dbReference type="GO" id="GO:0005536">
    <property type="term" value="F:D-glucose binding"/>
    <property type="evidence" value="ECO:0007669"/>
    <property type="project" value="InterPro"/>
</dbReference>
<dbReference type="GO" id="GO:0004340">
    <property type="term" value="F:glucokinase activity"/>
    <property type="evidence" value="ECO:0007669"/>
    <property type="project" value="UniProtKB-UniRule"/>
</dbReference>
<dbReference type="GO" id="GO:0006096">
    <property type="term" value="P:glycolytic process"/>
    <property type="evidence" value="ECO:0007669"/>
    <property type="project" value="UniProtKB-UniRule"/>
</dbReference>
<dbReference type="CDD" id="cd24008">
    <property type="entry name" value="ASKHA_NBD_GLK"/>
    <property type="match status" value="1"/>
</dbReference>
<dbReference type="FunFam" id="3.40.367.20:FF:000002">
    <property type="entry name" value="Glucokinase"/>
    <property type="match status" value="1"/>
</dbReference>
<dbReference type="Gene3D" id="3.30.420.40">
    <property type="match status" value="1"/>
</dbReference>
<dbReference type="Gene3D" id="3.40.367.20">
    <property type="match status" value="1"/>
</dbReference>
<dbReference type="HAMAP" id="MF_00524">
    <property type="entry name" value="Glucokinase"/>
    <property type="match status" value="1"/>
</dbReference>
<dbReference type="InterPro" id="IPR043129">
    <property type="entry name" value="ATPase_NBD"/>
</dbReference>
<dbReference type="InterPro" id="IPR050201">
    <property type="entry name" value="Bacterial_glucokinase"/>
</dbReference>
<dbReference type="InterPro" id="IPR003836">
    <property type="entry name" value="Glucokinase"/>
</dbReference>
<dbReference type="NCBIfam" id="TIGR00749">
    <property type="entry name" value="glk"/>
    <property type="match status" value="1"/>
</dbReference>
<dbReference type="NCBIfam" id="NF001416">
    <property type="entry name" value="PRK00292.1-3"/>
    <property type="match status" value="1"/>
</dbReference>
<dbReference type="PANTHER" id="PTHR47690">
    <property type="entry name" value="GLUCOKINASE"/>
    <property type="match status" value="1"/>
</dbReference>
<dbReference type="PANTHER" id="PTHR47690:SF1">
    <property type="entry name" value="GLUCOKINASE"/>
    <property type="match status" value="1"/>
</dbReference>
<dbReference type="Pfam" id="PF02685">
    <property type="entry name" value="Glucokinase"/>
    <property type="match status" value="1"/>
</dbReference>
<dbReference type="SUPFAM" id="SSF53067">
    <property type="entry name" value="Actin-like ATPase domain"/>
    <property type="match status" value="1"/>
</dbReference>